<name>BACS2_HALSA</name>
<reference key="1">
    <citation type="journal article" date="1996" name="Proc. Natl. Acad. Sci. U.S.A.">
        <title>The primary structures of the Archaeon Halobacterium salinarium blue light receptor sensory rhodopsin II and its transducer, a methyl-accepting protein.</title>
        <authorList>
            <person name="Zhang W."/>
            <person name="Brooun A."/>
            <person name="Mueller M.M."/>
            <person name="Alam M."/>
        </authorList>
    </citation>
    <scope>NUCLEOTIDE SEQUENCE [GENOMIC DNA]</scope>
    <source>
        <strain>Flx15</strain>
    </source>
</reference>
<reference key="2">
    <citation type="journal article" date="2000" name="Proc. Natl. Acad. Sci. U.S.A.">
        <title>Genome sequence of Halobacterium species NRC-1.</title>
        <authorList>
            <person name="Ng W.V."/>
            <person name="Kennedy S.P."/>
            <person name="Mahairas G.G."/>
            <person name="Berquist B."/>
            <person name="Pan M."/>
            <person name="Shukla H.D."/>
            <person name="Lasky S.R."/>
            <person name="Baliga N.S."/>
            <person name="Thorsson V."/>
            <person name="Sbrogna J."/>
            <person name="Swartzell S."/>
            <person name="Weir D."/>
            <person name="Hall J."/>
            <person name="Dahl T.A."/>
            <person name="Welti R."/>
            <person name="Goo Y.A."/>
            <person name="Leithauser B."/>
            <person name="Keller K."/>
            <person name="Cruz R."/>
            <person name="Danson M.J."/>
            <person name="Hough D.W."/>
            <person name="Maddocks D.G."/>
            <person name="Jablonski P.E."/>
            <person name="Krebs M.P."/>
            <person name="Angevine C.M."/>
            <person name="Dale H."/>
            <person name="Isenbarger T.A."/>
            <person name="Peck R.F."/>
            <person name="Pohlschroder M."/>
            <person name="Spudich J.L."/>
            <person name="Jung K.-H."/>
            <person name="Alam M."/>
            <person name="Freitas T."/>
            <person name="Hou S."/>
            <person name="Daniels C.J."/>
            <person name="Dennis P.P."/>
            <person name="Omer A.D."/>
            <person name="Ebhardt H."/>
            <person name="Lowe T.M."/>
            <person name="Liang P."/>
            <person name="Riley M."/>
            <person name="Hood L."/>
            <person name="DasSarma S."/>
        </authorList>
    </citation>
    <scope>NUCLEOTIDE SEQUENCE [LARGE SCALE GENOMIC DNA]</scope>
    <source>
        <strain>ATCC 700922 / JCM 11081 / NRC-1</strain>
    </source>
</reference>
<accession>P71411</accession>
<accession>Q9HP82</accession>
<feature type="chain" id="PRO_0000196280" description="Sensory rhodopsin-2">
    <location>
        <begin position="1"/>
        <end position="237"/>
    </location>
</feature>
<feature type="topological domain" description="Extracellular" evidence="1">
    <location>
        <begin position="1"/>
        <end position="2"/>
    </location>
</feature>
<feature type="transmembrane region" description="Helical; Name=Helix A" evidence="1">
    <location>
        <begin position="3"/>
        <end position="23"/>
    </location>
</feature>
<feature type="topological domain" description="Cytoplasmic" evidence="1">
    <location>
        <begin position="24"/>
        <end position="31"/>
    </location>
</feature>
<feature type="transmembrane region" description="Helical; Name=Helix B" evidence="1">
    <location>
        <begin position="32"/>
        <end position="53"/>
    </location>
</feature>
<feature type="topological domain" description="Extracellular" evidence="1">
    <location>
        <begin position="54"/>
        <end position="67"/>
    </location>
</feature>
<feature type="transmembrane region" description="Helical; Name=Helix C" evidence="1">
    <location>
        <begin position="68"/>
        <end position="89"/>
    </location>
</feature>
<feature type="topological domain" description="Cytoplasmic" evidence="1">
    <location>
        <begin position="90"/>
        <end position="92"/>
    </location>
</feature>
<feature type="transmembrane region" description="Helical; Name=Helix D" evidence="1">
    <location>
        <begin position="93"/>
        <end position="115"/>
    </location>
</feature>
<feature type="topological domain" description="Extracellular" evidence="1">
    <location>
        <begin position="116"/>
        <end position="119"/>
    </location>
</feature>
<feature type="transmembrane region" description="Helical; Name=Helix E" evidence="1">
    <location>
        <begin position="120"/>
        <end position="147"/>
    </location>
</feature>
<feature type="topological domain" description="Cytoplasmic" evidence="1">
    <location>
        <begin position="148"/>
        <end position="150"/>
    </location>
</feature>
<feature type="transmembrane region" description="Helical; Name=Helix F" evidence="1">
    <location>
        <begin position="151"/>
        <end position="178"/>
    </location>
</feature>
<feature type="topological domain" description="Extracellular" evidence="1">
    <location>
        <begin position="179"/>
        <end position="186"/>
    </location>
</feature>
<feature type="transmembrane region" description="Helical; Name=Helix G" evidence="1">
    <location>
        <begin position="187"/>
        <end position="214"/>
    </location>
</feature>
<feature type="topological domain" description="Cytoplasmic" evidence="1">
    <location>
        <begin position="215"/>
        <end position="237"/>
    </location>
</feature>
<feature type="modified residue" description="N6-(retinylidene)lysine" evidence="1">
    <location>
        <position position="202"/>
    </location>
</feature>
<protein>
    <recommendedName>
        <fullName>Sensory rhodopsin-2</fullName>
    </recommendedName>
    <alternativeName>
        <fullName>Sensory rhodopsin II</fullName>
        <shortName>SR-II</shortName>
    </alternativeName>
</protein>
<organism>
    <name type="scientific">Halobacterium salinarum (strain ATCC 700922 / JCM 11081 / NRC-1)</name>
    <name type="common">Halobacterium halobium</name>
    <dbReference type="NCBI Taxonomy" id="64091"/>
    <lineage>
        <taxon>Archaea</taxon>
        <taxon>Methanobacteriati</taxon>
        <taxon>Methanobacteriota</taxon>
        <taxon>Stenosarchaea group</taxon>
        <taxon>Halobacteria</taxon>
        <taxon>Halobacteriales</taxon>
        <taxon>Halobacteriaceae</taxon>
        <taxon>Halobacterium</taxon>
        <taxon>Halobacterium salinarum NRC-34001</taxon>
    </lineage>
</organism>
<gene>
    <name type="primary">sop2</name>
    <name type="synonym">sopII</name>
    <name type="ordered locus">VNG_1764G</name>
</gene>
<sequence>MALTTWFWVGAVGMLAGTVLPIRDCIRHPSHRRYDLVLAGITGLAAIAYTTMGLGITATTVGDRTVYLARYIDWLVTTPLIVLYLAMLARPGHRTSAWLLAADVFVIAAGIAAALTTGVQRWLFFAVGAAGYAALLYGLLGTLPRALGDDPRVRSLFVTLRNITVVLWTLYPVVWLLSPAGIGILQTEMYTIVVVYLDFISKVAFVAFAVLGADAVSRLVAADAAAPATAEPTPDGD</sequence>
<dbReference type="EMBL" id="U62676">
    <property type="protein sequence ID" value="AAC44370.1"/>
    <property type="molecule type" value="Genomic_DNA"/>
</dbReference>
<dbReference type="EMBL" id="AE004437">
    <property type="protein sequence ID" value="AAG19988.1"/>
    <property type="molecule type" value="Genomic_DNA"/>
</dbReference>
<dbReference type="PIR" id="H84327">
    <property type="entry name" value="H84327"/>
</dbReference>
<dbReference type="PIR" id="T44947">
    <property type="entry name" value="T44947"/>
</dbReference>
<dbReference type="RefSeq" id="WP_010903286.1">
    <property type="nucleotide sequence ID" value="NC_002607.1"/>
</dbReference>
<dbReference type="SMR" id="P71411"/>
<dbReference type="STRING" id="64091.VNG_1764G"/>
<dbReference type="TCDB" id="3.E.1.3.2">
    <property type="family name" value="the ion-translocating microbial rhodopsin (mr) family"/>
</dbReference>
<dbReference type="PaxDb" id="64091-VNG_1764G"/>
<dbReference type="GeneID" id="89343082"/>
<dbReference type="KEGG" id="hal:VNG_1764G"/>
<dbReference type="PATRIC" id="fig|64091.14.peg.1343"/>
<dbReference type="HOGENOM" id="CLU_054785_5_1_2"/>
<dbReference type="InParanoid" id="P71411"/>
<dbReference type="OrthoDB" id="186433at2157"/>
<dbReference type="PhylomeDB" id="P71411"/>
<dbReference type="Proteomes" id="UP000000554">
    <property type="component" value="Chromosome"/>
</dbReference>
<dbReference type="GO" id="GO:0005886">
    <property type="term" value="C:plasma membrane"/>
    <property type="evidence" value="ECO:0007669"/>
    <property type="project" value="UniProtKB-SubCell"/>
</dbReference>
<dbReference type="GO" id="GO:0005216">
    <property type="term" value="F:monoatomic ion channel activity"/>
    <property type="evidence" value="ECO:0007669"/>
    <property type="project" value="InterPro"/>
</dbReference>
<dbReference type="GO" id="GO:0009881">
    <property type="term" value="F:photoreceptor activity"/>
    <property type="evidence" value="ECO:0007669"/>
    <property type="project" value="UniProtKB-KW"/>
</dbReference>
<dbReference type="GO" id="GO:0007602">
    <property type="term" value="P:phototransduction"/>
    <property type="evidence" value="ECO:0007669"/>
    <property type="project" value="UniProtKB-KW"/>
</dbReference>
<dbReference type="CDD" id="cd15029">
    <property type="entry name" value="7tm_SRI_SRII"/>
    <property type="match status" value="1"/>
</dbReference>
<dbReference type="Gene3D" id="1.20.1070.10">
    <property type="entry name" value="Rhodopsin 7-helix transmembrane proteins"/>
    <property type="match status" value="1"/>
</dbReference>
<dbReference type="InterPro" id="IPR001425">
    <property type="entry name" value="Arc/bac/fun_rhodopsins"/>
</dbReference>
<dbReference type="InterPro" id="IPR018229">
    <property type="entry name" value="Rhodopsin_retinal_BS"/>
</dbReference>
<dbReference type="PANTHER" id="PTHR28286">
    <property type="match status" value="1"/>
</dbReference>
<dbReference type="PANTHER" id="PTHR28286:SF2">
    <property type="entry name" value="BACTERIORHODOPSIN _OPSIN, NOPA (EUROFUNG)"/>
    <property type="match status" value="1"/>
</dbReference>
<dbReference type="Pfam" id="PF01036">
    <property type="entry name" value="Bac_rhodopsin"/>
    <property type="match status" value="1"/>
</dbReference>
<dbReference type="PRINTS" id="PR00251">
    <property type="entry name" value="BACTRLOPSIN"/>
</dbReference>
<dbReference type="SMART" id="SM01021">
    <property type="entry name" value="Bac_rhodopsin"/>
    <property type="match status" value="1"/>
</dbReference>
<dbReference type="SUPFAM" id="SSF81321">
    <property type="entry name" value="Family A G protein-coupled receptor-like"/>
    <property type="match status" value="1"/>
</dbReference>
<dbReference type="PROSITE" id="PS00950">
    <property type="entry name" value="BACTERIAL_OPSIN_1"/>
    <property type="match status" value="1"/>
</dbReference>
<dbReference type="PROSITE" id="PS00327">
    <property type="entry name" value="BACTERIAL_OPSIN_RET"/>
    <property type="match status" value="1"/>
</dbReference>
<proteinExistence type="inferred from homology"/>
<comment type="function">
    <text evidence="1">Photophobic photoreceptor responsible for the negative phototaxis. Activates the sensory rhodopsin II transducer (HTR-II) in response to blue light (By similarity).</text>
</comment>
<comment type="subunit">
    <text evidence="1">Interacts with HTR-II.</text>
</comment>
<comment type="subcellular location">
    <subcellularLocation>
        <location evidence="1">Cell membrane</location>
        <topology evidence="1">Multi-pass membrane protein</topology>
    </subcellularLocation>
</comment>
<comment type="similarity">
    <text evidence="2">Belongs to the archaeal/bacterial/fungal opsin family.</text>
</comment>
<evidence type="ECO:0000250" key="1"/>
<evidence type="ECO:0000305" key="2"/>
<keyword id="KW-1003">Cell membrane</keyword>
<keyword id="KW-0157">Chromophore</keyword>
<keyword id="KW-0472">Membrane</keyword>
<keyword id="KW-0600">Photoreceptor protein</keyword>
<keyword id="KW-0675">Receptor</keyword>
<keyword id="KW-1185">Reference proteome</keyword>
<keyword id="KW-0681">Retinal protein</keyword>
<keyword id="KW-0716">Sensory transduction</keyword>
<keyword id="KW-0812">Transmembrane</keyword>
<keyword id="KW-1133">Transmembrane helix</keyword>